<feature type="chain" id="PRO_0000332276" description="Ciliary microtubule inner protein 2C">
    <location>
        <begin position="1"/>
        <end position="201"/>
    </location>
</feature>
<gene>
    <name type="primary">CIMIP2C</name>
    <name type="synonym">FAM166C</name>
</gene>
<protein>
    <recommendedName>
        <fullName>Ciliary microtubule inner protein 2C</fullName>
    </recommendedName>
</protein>
<keyword id="KW-0002">3D-structure</keyword>
<keyword id="KW-0966">Cell projection</keyword>
<keyword id="KW-0969">Cilium</keyword>
<keyword id="KW-0963">Cytoplasm</keyword>
<keyword id="KW-0206">Cytoskeleton</keyword>
<keyword id="KW-0282">Flagellum</keyword>
<keyword id="KW-1185">Reference proteome</keyword>
<sequence>MASRSAGTLLTEFNAAYVPPGLMPGYKGHVPGVAFSFGSPYGTTTLKYFQDQRNAALGRSSTAFSRGGHFPTIFSLNPTQVLRNRALTRDRWLHTPSYTRFNLDSSRWAELLHFYQMAQRHREHYQDKTGLVHRVPYFVLPVKEWDRYPIPTDLPPLSPKEKWHLLRVAPENLRTYQTFPSGKRVSPQERQRRDCYFEFRA</sequence>
<evidence type="ECO:0000250" key="1">
    <source>
        <dbReference type="UniProtKB" id="A6NJV1"/>
    </source>
</evidence>
<evidence type="ECO:0000250" key="2">
    <source>
        <dbReference type="UniProtKB" id="Q9DAS2"/>
    </source>
</evidence>
<evidence type="ECO:0000269" key="3">
    <source>
    </source>
</evidence>
<evidence type="ECO:0000305" key="4"/>
<evidence type="ECO:0007744" key="5">
    <source>
        <dbReference type="PDB" id="8OTZ"/>
    </source>
</evidence>
<name>CMI2C_BOVIN</name>
<comment type="function">
    <text evidence="2">Microtubule inner protein (MIP) part of the dynein-decorated doublet microtubules (DMTs) in cilia axoneme, which is required for motile cilia beating (By similarity). Binds to the intra-tubulin interfaces (By similarity).</text>
</comment>
<comment type="subunit">
    <text evidence="3">Microtubule inner protein component of sperm flagellar doublet microtubules.</text>
</comment>
<comment type="subcellular location">
    <subcellularLocation>
        <location evidence="1">Cytoplasm</location>
        <location evidence="1">Cytoskeleton</location>
        <location evidence="1">Cilium axoneme</location>
    </subcellularLocation>
    <subcellularLocation>
        <location evidence="3">Cytoplasm</location>
        <location evidence="3">Cytoskeleton</location>
        <location evidence="3">Flagellum axoneme</location>
    </subcellularLocation>
</comment>
<comment type="similarity">
    <text evidence="4">Belongs to the CIMIP2 family.</text>
</comment>
<proteinExistence type="evidence at protein level"/>
<organism>
    <name type="scientific">Bos taurus</name>
    <name type="common">Bovine</name>
    <dbReference type="NCBI Taxonomy" id="9913"/>
    <lineage>
        <taxon>Eukaryota</taxon>
        <taxon>Metazoa</taxon>
        <taxon>Chordata</taxon>
        <taxon>Craniata</taxon>
        <taxon>Vertebrata</taxon>
        <taxon>Euteleostomi</taxon>
        <taxon>Mammalia</taxon>
        <taxon>Eutheria</taxon>
        <taxon>Laurasiatheria</taxon>
        <taxon>Artiodactyla</taxon>
        <taxon>Ruminantia</taxon>
        <taxon>Pecora</taxon>
        <taxon>Bovidae</taxon>
        <taxon>Bovinae</taxon>
        <taxon>Bos</taxon>
    </lineage>
</organism>
<reference key="1">
    <citation type="submission" date="2005-08" db="EMBL/GenBank/DDBJ databases">
        <authorList>
            <consortium name="NIH - Mammalian Gene Collection (MGC) project"/>
        </authorList>
    </citation>
    <scope>NUCLEOTIDE SEQUENCE [LARGE SCALE MRNA]</scope>
    <source>
        <strain>Hereford</strain>
        <tissue>Testis</tissue>
    </source>
</reference>
<reference evidence="5" key="2">
    <citation type="journal article" date="2023" name="Cell">
        <title>Structural specializations of the sperm tail.</title>
        <authorList>
            <person name="Leung M.R."/>
            <person name="Zeng J."/>
            <person name="Wang X."/>
            <person name="Roelofs M.C."/>
            <person name="Huang W."/>
            <person name="Zenezini Chiozzi R."/>
            <person name="Hevler J.F."/>
            <person name="Heck A.J.R."/>
            <person name="Dutcher S.K."/>
            <person name="Brown A."/>
            <person name="Zhang R."/>
            <person name="Zeev-Ben-Mordehai T."/>
        </authorList>
    </citation>
    <scope>STRUCTURE BY ELECTRON MICROSCOPY (3.60 ANGSTROMS)</scope>
    <scope>SUBUNIT</scope>
    <scope>SUBCELLULAR LOCATION</scope>
</reference>
<dbReference type="EMBL" id="BC102738">
    <property type="protein sequence ID" value="AAI02739.1"/>
    <property type="molecule type" value="mRNA"/>
</dbReference>
<dbReference type="RefSeq" id="NP_001070462.1">
    <property type="nucleotide sequence ID" value="NM_001076994.2"/>
</dbReference>
<dbReference type="PDB" id="8OTZ">
    <property type="method" value="EM"/>
    <property type="resolution" value="3.60 A"/>
    <property type="chains" value="Ap/Aq/Ar=1-201"/>
</dbReference>
<dbReference type="PDBsum" id="8OTZ"/>
<dbReference type="EMDB" id="EMD-17187"/>
<dbReference type="EMDB" id="EMD-50664"/>
<dbReference type="SMR" id="Q3SZR5"/>
<dbReference type="FunCoup" id="Q3SZR5">
    <property type="interactions" value="59"/>
</dbReference>
<dbReference type="STRING" id="9913.ENSBTAP00000041595"/>
<dbReference type="PaxDb" id="9913-ENSBTAP00000041595"/>
<dbReference type="Ensembl" id="ENSBTAT00000044082.2">
    <property type="protein sequence ID" value="ENSBTAP00000041595.1"/>
    <property type="gene ID" value="ENSBTAG00000031150.3"/>
</dbReference>
<dbReference type="GeneID" id="767918"/>
<dbReference type="KEGG" id="bta:767918"/>
<dbReference type="CTD" id="767918"/>
<dbReference type="VEuPathDB" id="HostDB:ENSBTAG00000031150"/>
<dbReference type="VGNC" id="VGNC:52618">
    <property type="gene designation" value="CIMIP2C"/>
</dbReference>
<dbReference type="eggNOG" id="ENOG502S0NQ">
    <property type="taxonomic scope" value="Eukaryota"/>
</dbReference>
<dbReference type="GeneTree" id="ENSGT00390000018634"/>
<dbReference type="HOGENOM" id="CLU_118165_0_0_1"/>
<dbReference type="InParanoid" id="Q3SZR5"/>
<dbReference type="OMA" id="RQKRDCY"/>
<dbReference type="OrthoDB" id="8181742at2759"/>
<dbReference type="TreeFam" id="TF329317"/>
<dbReference type="Proteomes" id="UP000009136">
    <property type="component" value="Chromosome 11"/>
</dbReference>
<dbReference type="Bgee" id="ENSBTAG00000031150">
    <property type="expression patterns" value="Expressed in semen and 35 other cell types or tissues"/>
</dbReference>
<dbReference type="GO" id="GO:0160111">
    <property type="term" value="C:axonemal A tubule inner sheath"/>
    <property type="evidence" value="ECO:0000250"/>
    <property type="project" value="UniProtKB"/>
</dbReference>
<dbReference type="GO" id="GO:0005879">
    <property type="term" value="C:axonemal microtubule"/>
    <property type="evidence" value="ECO:0000250"/>
    <property type="project" value="UniProtKB"/>
</dbReference>
<dbReference type="GO" id="GO:0036126">
    <property type="term" value="C:sperm flagellum"/>
    <property type="evidence" value="ECO:0000250"/>
    <property type="project" value="UniProtKB"/>
</dbReference>
<dbReference type="GO" id="GO:0030317">
    <property type="term" value="P:flagellated sperm motility"/>
    <property type="evidence" value="ECO:0000250"/>
    <property type="project" value="UniProtKB"/>
</dbReference>
<dbReference type="InterPro" id="IPR052329">
    <property type="entry name" value="CIMIP2C"/>
</dbReference>
<dbReference type="InterPro" id="IPR018902">
    <property type="entry name" value="CMI2A-C-like_dom"/>
</dbReference>
<dbReference type="PANTHER" id="PTHR34924:SF1">
    <property type="entry name" value="PROTEIN FAM166C"/>
    <property type="match status" value="1"/>
</dbReference>
<dbReference type="PANTHER" id="PTHR34924">
    <property type="entry name" value="UPF0573 PROTEIN C2ORF70"/>
    <property type="match status" value="1"/>
</dbReference>
<dbReference type="Pfam" id="PF10629">
    <property type="entry name" value="CMI2B-like"/>
    <property type="match status" value="1"/>
</dbReference>
<accession>Q3SZR5</accession>